<comment type="function">
    <text evidence="1">Together with the chaperonin GroEL, plays an essential role in assisting protein folding. The GroEL-GroES system forms a nano-cage that allows encapsulation of the non-native substrate proteins and provides a physical environment optimized to promote and accelerate protein folding. GroES binds to the apical surface of the GroEL ring, thereby capping the opening of the GroEL channel.</text>
</comment>
<comment type="subunit">
    <text evidence="1">Heptamer of 7 subunits arranged in a ring. Interacts with the chaperonin GroEL.</text>
</comment>
<comment type="subcellular location">
    <subcellularLocation>
        <location evidence="1">Cytoplasm</location>
    </subcellularLocation>
</comment>
<comment type="similarity">
    <text evidence="1">Belongs to the GroES chaperonin family.</text>
</comment>
<accession>C4XGI3</accession>
<keyword id="KW-0143">Chaperone</keyword>
<keyword id="KW-0963">Cytoplasm</keyword>
<evidence type="ECO:0000255" key="1">
    <source>
        <dbReference type="HAMAP-Rule" id="MF_00580"/>
    </source>
</evidence>
<sequence>MKLKPLGDRVLVKRLEQEEVTKGGIIIPDSAKEKPMKGEVIAVGPGKLAEDGKHLKMHVEKGDLVLFNKYAGTEIKVDDEDFLVMREDDILAVIEA</sequence>
<reference key="1">
    <citation type="journal article" date="2009" name="Genome Res.">
        <title>Whole genome sequence of Desulfovibrio magneticus strain RS-1 revealed common gene clusters in magnetotactic bacteria.</title>
        <authorList>
            <person name="Nakazawa H."/>
            <person name="Arakaki A."/>
            <person name="Narita-Yamada S."/>
            <person name="Yashiro I."/>
            <person name="Jinno K."/>
            <person name="Aoki N."/>
            <person name="Tsuruyama A."/>
            <person name="Okamura Y."/>
            <person name="Tanikawa S."/>
            <person name="Fujita N."/>
            <person name="Takeyama H."/>
            <person name="Matsunaga T."/>
        </authorList>
    </citation>
    <scope>NUCLEOTIDE SEQUENCE [LARGE SCALE GENOMIC DNA]</scope>
    <source>
        <strain>ATCC 700980 / DSM 13731 / RS-1</strain>
    </source>
</reference>
<dbReference type="EMBL" id="AP010904">
    <property type="protein sequence ID" value="BAH73763.1"/>
    <property type="molecule type" value="Genomic_DNA"/>
</dbReference>
<dbReference type="RefSeq" id="WP_006919070.1">
    <property type="nucleotide sequence ID" value="NC_012796.1"/>
</dbReference>
<dbReference type="SMR" id="C4XGI3"/>
<dbReference type="STRING" id="573370.DMR_02720"/>
<dbReference type="KEGG" id="dma:DMR_02720"/>
<dbReference type="eggNOG" id="COG0234">
    <property type="taxonomic scope" value="Bacteria"/>
</dbReference>
<dbReference type="HOGENOM" id="CLU_132825_2_0_7"/>
<dbReference type="OrthoDB" id="9806791at2"/>
<dbReference type="Proteomes" id="UP000009071">
    <property type="component" value="Chromosome"/>
</dbReference>
<dbReference type="GO" id="GO:0005737">
    <property type="term" value="C:cytoplasm"/>
    <property type="evidence" value="ECO:0007669"/>
    <property type="project" value="UniProtKB-SubCell"/>
</dbReference>
<dbReference type="GO" id="GO:0005524">
    <property type="term" value="F:ATP binding"/>
    <property type="evidence" value="ECO:0007669"/>
    <property type="project" value="InterPro"/>
</dbReference>
<dbReference type="GO" id="GO:0046872">
    <property type="term" value="F:metal ion binding"/>
    <property type="evidence" value="ECO:0007669"/>
    <property type="project" value="TreeGrafter"/>
</dbReference>
<dbReference type="GO" id="GO:0044183">
    <property type="term" value="F:protein folding chaperone"/>
    <property type="evidence" value="ECO:0007669"/>
    <property type="project" value="InterPro"/>
</dbReference>
<dbReference type="GO" id="GO:0051087">
    <property type="term" value="F:protein-folding chaperone binding"/>
    <property type="evidence" value="ECO:0007669"/>
    <property type="project" value="TreeGrafter"/>
</dbReference>
<dbReference type="GO" id="GO:0051082">
    <property type="term" value="F:unfolded protein binding"/>
    <property type="evidence" value="ECO:0007669"/>
    <property type="project" value="TreeGrafter"/>
</dbReference>
<dbReference type="GO" id="GO:0051085">
    <property type="term" value="P:chaperone cofactor-dependent protein refolding"/>
    <property type="evidence" value="ECO:0007669"/>
    <property type="project" value="TreeGrafter"/>
</dbReference>
<dbReference type="CDD" id="cd00320">
    <property type="entry name" value="cpn10"/>
    <property type="match status" value="1"/>
</dbReference>
<dbReference type="FunFam" id="2.30.33.40:FF:000001">
    <property type="entry name" value="10 kDa chaperonin"/>
    <property type="match status" value="1"/>
</dbReference>
<dbReference type="Gene3D" id="2.30.33.40">
    <property type="entry name" value="GroES chaperonin"/>
    <property type="match status" value="1"/>
</dbReference>
<dbReference type="HAMAP" id="MF_00580">
    <property type="entry name" value="CH10"/>
    <property type="match status" value="1"/>
</dbReference>
<dbReference type="InterPro" id="IPR020818">
    <property type="entry name" value="Chaperonin_GroES"/>
</dbReference>
<dbReference type="InterPro" id="IPR037124">
    <property type="entry name" value="Chaperonin_GroES_sf"/>
</dbReference>
<dbReference type="InterPro" id="IPR018369">
    <property type="entry name" value="Chaprnonin_Cpn10_CS"/>
</dbReference>
<dbReference type="InterPro" id="IPR011032">
    <property type="entry name" value="GroES-like_sf"/>
</dbReference>
<dbReference type="NCBIfam" id="NF001527">
    <property type="entry name" value="PRK00364.1-2"/>
    <property type="match status" value="1"/>
</dbReference>
<dbReference type="NCBIfam" id="NF001531">
    <property type="entry name" value="PRK00364.2-2"/>
    <property type="match status" value="1"/>
</dbReference>
<dbReference type="NCBIfam" id="NF001533">
    <property type="entry name" value="PRK00364.2-4"/>
    <property type="match status" value="1"/>
</dbReference>
<dbReference type="NCBIfam" id="NF001534">
    <property type="entry name" value="PRK00364.2-5"/>
    <property type="match status" value="1"/>
</dbReference>
<dbReference type="PANTHER" id="PTHR10772">
    <property type="entry name" value="10 KDA HEAT SHOCK PROTEIN"/>
    <property type="match status" value="1"/>
</dbReference>
<dbReference type="PANTHER" id="PTHR10772:SF63">
    <property type="entry name" value="20 KDA CHAPERONIN, CHLOROPLASTIC"/>
    <property type="match status" value="1"/>
</dbReference>
<dbReference type="Pfam" id="PF00166">
    <property type="entry name" value="Cpn10"/>
    <property type="match status" value="1"/>
</dbReference>
<dbReference type="PRINTS" id="PR00297">
    <property type="entry name" value="CHAPERONIN10"/>
</dbReference>
<dbReference type="SMART" id="SM00883">
    <property type="entry name" value="Cpn10"/>
    <property type="match status" value="1"/>
</dbReference>
<dbReference type="SUPFAM" id="SSF50129">
    <property type="entry name" value="GroES-like"/>
    <property type="match status" value="1"/>
</dbReference>
<dbReference type="PROSITE" id="PS00681">
    <property type="entry name" value="CHAPERONINS_CPN10"/>
    <property type="match status" value="1"/>
</dbReference>
<proteinExistence type="inferred from homology"/>
<protein>
    <recommendedName>
        <fullName evidence="1">Co-chaperonin GroES</fullName>
    </recommendedName>
    <alternativeName>
        <fullName evidence="1">10 kDa chaperonin</fullName>
    </alternativeName>
    <alternativeName>
        <fullName evidence="1">Chaperonin-10</fullName>
        <shortName evidence="1">Cpn10</shortName>
    </alternativeName>
</protein>
<name>CH10_SOLM1</name>
<gene>
    <name evidence="1" type="primary">groES</name>
    <name evidence="1" type="synonym">groS</name>
    <name type="ordered locus">DMR_02720</name>
</gene>
<feature type="chain" id="PRO_1000212111" description="Co-chaperonin GroES">
    <location>
        <begin position="1"/>
        <end position="96"/>
    </location>
</feature>
<organism>
    <name type="scientific">Solidesulfovibrio magneticus (strain ATCC 700980 / DSM 13731 / RS-1)</name>
    <name type="common">Desulfovibrio magneticus</name>
    <dbReference type="NCBI Taxonomy" id="573370"/>
    <lineage>
        <taxon>Bacteria</taxon>
        <taxon>Pseudomonadati</taxon>
        <taxon>Thermodesulfobacteriota</taxon>
        <taxon>Desulfovibrionia</taxon>
        <taxon>Desulfovibrionales</taxon>
        <taxon>Desulfovibrionaceae</taxon>
        <taxon>Solidesulfovibrio</taxon>
    </lineage>
</organism>